<reference key="1">
    <citation type="journal article" date="2003" name="Lancet">
        <title>Sequencing and analysis of the genome of the Whipple's disease bacterium Tropheryma whipplei.</title>
        <authorList>
            <person name="Bentley S.D."/>
            <person name="Maiwald M."/>
            <person name="Murphy L.D."/>
            <person name="Pallen M.J."/>
            <person name="Yeats C.A."/>
            <person name="Dover L.G."/>
            <person name="Norbertczak H.T."/>
            <person name="Besra G.S."/>
            <person name="Quail M.A."/>
            <person name="Harris D.E."/>
            <person name="von Herbay A."/>
            <person name="Goble A."/>
            <person name="Rutter S."/>
            <person name="Squares R."/>
            <person name="Squares S."/>
            <person name="Barrell B.G."/>
            <person name="Parkhill J."/>
            <person name="Relman D.A."/>
        </authorList>
    </citation>
    <scope>NUCLEOTIDE SEQUENCE [LARGE SCALE GENOMIC DNA]</scope>
    <source>
        <strain>TW08/27</strain>
    </source>
</reference>
<feature type="chain" id="PRO_0000187847" description="Peptidyl-tRNA hydrolase">
    <location>
        <begin position="1"/>
        <end position="186"/>
    </location>
</feature>
<feature type="active site" description="Proton acceptor" evidence="1">
    <location>
        <position position="21"/>
    </location>
</feature>
<feature type="binding site" evidence="1">
    <location>
        <position position="16"/>
    </location>
    <ligand>
        <name>tRNA</name>
        <dbReference type="ChEBI" id="CHEBI:17843"/>
    </ligand>
</feature>
<feature type="binding site" evidence="1">
    <location>
        <position position="60"/>
    </location>
    <ligand>
        <name>tRNA</name>
        <dbReference type="ChEBI" id="CHEBI:17843"/>
    </ligand>
</feature>
<feature type="binding site" evidence="1">
    <location>
        <position position="62"/>
    </location>
    <ligand>
        <name>tRNA</name>
        <dbReference type="ChEBI" id="CHEBI:17843"/>
    </ligand>
</feature>
<feature type="site" description="Discriminates between blocked and unblocked aminoacyl-tRNA" evidence="1">
    <location>
        <position position="11"/>
    </location>
</feature>
<feature type="site" description="Stabilizes the basic form of H active site to accept a proton" evidence="1">
    <location>
        <position position="85"/>
    </location>
</feature>
<protein>
    <recommendedName>
        <fullName evidence="1">Peptidyl-tRNA hydrolase</fullName>
        <shortName evidence="1">Pth</shortName>
        <ecNumber evidence="1">3.1.1.29</ecNumber>
    </recommendedName>
</protein>
<gene>
    <name evidence="1" type="primary">pth</name>
    <name type="ordered locus">TW673</name>
</gene>
<proteinExistence type="inferred from homology"/>
<dbReference type="EC" id="3.1.1.29" evidence="1"/>
<dbReference type="EMBL" id="BX251412">
    <property type="protein sequence ID" value="CAD67332.1"/>
    <property type="molecule type" value="Genomic_DNA"/>
</dbReference>
<dbReference type="SMR" id="Q83HD8"/>
<dbReference type="KEGG" id="tws:TW673"/>
<dbReference type="HOGENOM" id="CLU_062456_4_1_11"/>
<dbReference type="GO" id="GO:0005737">
    <property type="term" value="C:cytoplasm"/>
    <property type="evidence" value="ECO:0007669"/>
    <property type="project" value="UniProtKB-SubCell"/>
</dbReference>
<dbReference type="GO" id="GO:0004045">
    <property type="term" value="F:peptidyl-tRNA hydrolase activity"/>
    <property type="evidence" value="ECO:0007669"/>
    <property type="project" value="UniProtKB-UniRule"/>
</dbReference>
<dbReference type="GO" id="GO:0000049">
    <property type="term" value="F:tRNA binding"/>
    <property type="evidence" value="ECO:0007669"/>
    <property type="project" value="UniProtKB-UniRule"/>
</dbReference>
<dbReference type="GO" id="GO:0006515">
    <property type="term" value="P:protein quality control for misfolded or incompletely synthesized proteins"/>
    <property type="evidence" value="ECO:0007669"/>
    <property type="project" value="UniProtKB-UniRule"/>
</dbReference>
<dbReference type="GO" id="GO:0072344">
    <property type="term" value="P:rescue of stalled ribosome"/>
    <property type="evidence" value="ECO:0007669"/>
    <property type="project" value="UniProtKB-UniRule"/>
</dbReference>
<dbReference type="CDD" id="cd00462">
    <property type="entry name" value="PTH"/>
    <property type="match status" value="1"/>
</dbReference>
<dbReference type="Gene3D" id="3.40.50.1470">
    <property type="entry name" value="Peptidyl-tRNA hydrolase"/>
    <property type="match status" value="1"/>
</dbReference>
<dbReference type="HAMAP" id="MF_00083">
    <property type="entry name" value="Pept_tRNA_hydro_bact"/>
    <property type="match status" value="1"/>
</dbReference>
<dbReference type="InterPro" id="IPR001328">
    <property type="entry name" value="Pept_tRNA_hydro"/>
</dbReference>
<dbReference type="InterPro" id="IPR018171">
    <property type="entry name" value="Pept_tRNA_hydro_CS"/>
</dbReference>
<dbReference type="InterPro" id="IPR036416">
    <property type="entry name" value="Pept_tRNA_hydro_sf"/>
</dbReference>
<dbReference type="NCBIfam" id="TIGR00447">
    <property type="entry name" value="pth"/>
    <property type="match status" value="1"/>
</dbReference>
<dbReference type="PANTHER" id="PTHR17224">
    <property type="entry name" value="PEPTIDYL-TRNA HYDROLASE"/>
    <property type="match status" value="1"/>
</dbReference>
<dbReference type="PANTHER" id="PTHR17224:SF1">
    <property type="entry name" value="PEPTIDYL-TRNA HYDROLASE"/>
    <property type="match status" value="1"/>
</dbReference>
<dbReference type="Pfam" id="PF01195">
    <property type="entry name" value="Pept_tRNA_hydro"/>
    <property type="match status" value="1"/>
</dbReference>
<dbReference type="SUPFAM" id="SSF53178">
    <property type="entry name" value="Peptidyl-tRNA hydrolase-like"/>
    <property type="match status" value="1"/>
</dbReference>
<dbReference type="PROSITE" id="PS01195">
    <property type="entry name" value="PEPT_TRNA_HYDROL_1"/>
    <property type="match status" value="1"/>
</dbReference>
<sequence>MCVYIVAGLGNPGPSYDKTRHNVGQMVLDILSGGARFRRHKTNNFYLSLGDILLVKPDAYMNLSGPVIASLMKFHSVSDLLVLHDDIDLPLGTLRFKQGGGTAGHRGLRSISDCLGSDYARLRVGIGRPENNQSIEDFVLSNFSPVQTDIISRTIQLAAEAVLHLRDNGFVGVKQFIAQTKSPSRT</sequence>
<comment type="function">
    <text evidence="1">Hydrolyzes ribosome-free peptidyl-tRNAs (with 1 or more amino acids incorporated), which drop off the ribosome during protein synthesis, or as a result of ribosome stalling.</text>
</comment>
<comment type="function">
    <text evidence="1">Catalyzes the release of premature peptidyl moieties from peptidyl-tRNA molecules trapped in stalled 50S ribosomal subunits, and thus maintains levels of free tRNAs and 50S ribosomes.</text>
</comment>
<comment type="catalytic activity">
    <reaction evidence="1">
        <text>an N-acyl-L-alpha-aminoacyl-tRNA + H2O = an N-acyl-L-amino acid + a tRNA + H(+)</text>
        <dbReference type="Rhea" id="RHEA:54448"/>
        <dbReference type="Rhea" id="RHEA-COMP:10123"/>
        <dbReference type="Rhea" id="RHEA-COMP:13883"/>
        <dbReference type="ChEBI" id="CHEBI:15377"/>
        <dbReference type="ChEBI" id="CHEBI:15378"/>
        <dbReference type="ChEBI" id="CHEBI:59874"/>
        <dbReference type="ChEBI" id="CHEBI:78442"/>
        <dbReference type="ChEBI" id="CHEBI:138191"/>
        <dbReference type="EC" id="3.1.1.29"/>
    </reaction>
</comment>
<comment type="subunit">
    <text evidence="1">Monomer.</text>
</comment>
<comment type="subcellular location">
    <subcellularLocation>
        <location evidence="1">Cytoplasm</location>
    </subcellularLocation>
</comment>
<comment type="similarity">
    <text evidence="1">Belongs to the PTH family.</text>
</comment>
<organism>
    <name type="scientific">Tropheryma whipplei (strain TW08/27)</name>
    <name type="common">Whipple's bacillus</name>
    <dbReference type="NCBI Taxonomy" id="218496"/>
    <lineage>
        <taxon>Bacteria</taxon>
        <taxon>Bacillati</taxon>
        <taxon>Actinomycetota</taxon>
        <taxon>Actinomycetes</taxon>
        <taxon>Micrococcales</taxon>
        <taxon>Tropherymataceae</taxon>
        <taxon>Tropheryma</taxon>
    </lineage>
</organism>
<keyword id="KW-0963">Cytoplasm</keyword>
<keyword id="KW-0378">Hydrolase</keyword>
<keyword id="KW-0694">RNA-binding</keyword>
<keyword id="KW-0820">tRNA-binding</keyword>
<evidence type="ECO:0000255" key="1">
    <source>
        <dbReference type="HAMAP-Rule" id="MF_00083"/>
    </source>
</evidence>
<accession>Q83HD8</accession>
<name>PTH_TROW8</name>